<keyword id="KW-1043">Host membrane</keyword>
<keyword id="KW-0472">Membrane</keyword>
<keyword id="KW-1185">Reference proteome</keyword>
<keyword id="KW-0812">Transmembrane</keyword>
<keyword id="KW-1133">Transmembrane helix</keyword>
<dbReference type="EMBL" id="AY848689">
    <property type="protein sequence ID" value="AAX45897.1"/>
    <property type="molecule type" value="Genomic_DNA"/>
</dbReference>
<dbReference type="PIR" id="A36776">
    <property type="entry name" value="WMBPPI"/>
</dbReference>
<dbReference type="RefSeq" id="NP_040690.1">
    <property type="nucleotide sequence ID" value="NC_001421.2"/>
</dbReference>
<dbReference type="RefSeq" id="YP_009639966.1">
    <property type="nucleotide sequence ID" value="NC_001421.2"/>
</dbReference>
<dbReference type="SMR" id="P27386"/>
<dbReference type="GeneID" id="1260944"/>
<dbReference type="Proteomes" id="UP000002143">
    <property type="component" value="Segment"/>
</dbReference>
<dbReference type="GO" id="GO:0033644">
    <property type="term" value="C:host cell membrane"/>
    <property type="evidence" value="ECO:0007669"/>
    <property type="project" value="UniProtKB-SubCell"/>
</dbReference>
<dbReference type="GO" id="GO:0016020">
    <property type="term" value="C:membrane"/>
    <property type="evidence" value="ECO:0007669"/>
    <property type="project" value="UniProtKB-KW"/>
</dbReference>
<reference key="1">
    <citation type="journal article" date="1991" name="Virology">
        <title>Genome organization of membrane-containing bacteriophage PRD1.</title>
        <authorList>
            <person name="Bamford J.K.H."/>
            <person name="Haenninen A.-L."/>
            <person name="Pakula T.M."/>
            <person name="Ojala P.M."/>
            <person name="Kalkkinen N."/>
            <person name="Frilander M."/>
            <person name="Bamford D.H."/>
        </authorList>
    </citation>
    <scope>NUCLEOTIDE SEQUENCE [GENOMIC DNA]</scope>
</reference>
<reference key="2">
    <citation type="journal article" date="2005" name="J. Mol. Biol.">
        <title>A snapshot of viral evolution from genome analysis of the tectiviridae family.</title>
        <authorList>
            <person name="Saren A.M."/>
            <person name="Ravantti J.J."/>
            <person name="Benson S.D."/>
            <person name="Burnett R.M."/>
            <person name="Paulin L."/>
            <person name="Bamford D.H."/>
            <person name="Bamford J.K.H."/>
        </authorList>
    </citation>
    <scope>NUCLEOTIDE SEQUENCE [GENOMIC DNA]</scope>
</reference>
<sequence length="42" mass="4541">MTENIISWNVANWVTVILMALAGYAVLALAAKVINNRAQEPA</sequence>
<organismHost>
    <name type="scientific">Acinetobacter calcoaceticus</name>
    <dbReference type="NCBI Taxonomy" id="471"/>
</organismHost>
<organismHost>
    <name type="scientific">Escherichia coli</name>
    <dbReference type="NCBI Taxonomy" id="562"/>
</organismHost>
<organismHost>
    <name type="scientific">Proteus mirabilis</name>
    <dbReference type="NCBI Taxonomy" id="584"/>
</organismHost>
<organismHost>
    <name type="scientific">Pseudomonas aeruginosa</name>
    <dbReference type="NCBI Taxonomy" id="287"/>
</organismHost>
<organismHost>
    <name type="scientific">Pseudomonas fluorescens</name>
    <dbReference type="NCBI Taxonomy" id="294"/>
</organismHost>
<organismHost>
    <name type="scientific">Pseudomonas putida</name>
    <name type="common">Arthrobacter siderocapsulatus</name>
    <dbReference type="NCBI Taxonomy" id="303"/>
</organismHost>
<organismHost>
    <name type="scientific">Salmonella typhimurium</name>
    <dbReference type="NCBI Taxonomy" id="90371"/>
</organismHost>
<organismHost>
    <name type="scientific">Vibrio cholerae</name>
    <dbReference type="NCBI Taxonomy" id="666"/>
</organismHost>
<name>YPI_BPPRD</name>
<protein>
    <recommendedName>
        <fullName>Putative uncharacterized 4.5 kDa protein in genes IX-XX intergenic region</fullName>
    </recommendedName>
    <alternativeName>
        <fullName>ORFi</fullName>
    </alternativeName>
</protein>
<proteinExistence type="predicted"/>
<comment type="subcellular location">
    <subcellularLocation>
        <location evidence="2">Host membrane</location>
        <topology evidence="2">Single-pass membrane protein</topology>
    </subcellularLocation>
</comment>
<evidence type="ECO:0000255" key="1"/>
<evidence type="ECO:0000305" key="2"/>
<accession>P27386</accession>
<accession>Q3T4N4</accession>
<organism>
    <name type="scientific">Enterobacteria phage PRD1</name>
    <name type="common">Bacteriophage PRD1</name>
    <dbReference type="NCBI Taxonomy" id="10658"/>
    <lineage>
        <taxon>Viruses</taxon>
        <taxon>Varidnaviria</taxon>
        <taxon>Bamfordvirae</taxon>
        <taxon>Preplasmiviricota</taxon>
        <taxon>Tectiliviricetes</taxon>
        <taxon>Kalamavirales</taxon>
        <taxon>Tectiviridae</taxon>
        <taxon>Alphatectivirus</taxon>
        <taxon>Alphatectivirus PRD1</taxon>
    </lineage>
</organism>
<feature type="chain" id="PRO_0000165364" description="Putative uncharacterized 4.5 kDa protein in genes IX-XX intergenic region">
    <location>
        <begin position="1"/>
        <end position="42"/>
    </location>
</feature>
<feature type="transmembrane region" description="Helical" evidence="1">
    <location>
        <begin position="10"/>
        <end position="30"/>
    </location>
</feature>